<organism>
    <name type="scientific">Shigella flexneri</name>
    <dbReference type="NCBI Taxonomy" id="623"/>
    <lineage>
        <taxon>Bacteria</taxon>
        <taxon>Pseudomonadati</taxon>
        <taxon>Pseudomonadota</taxon>
        <taxon>Gammaproteobacteria</taxon>
        <taxon>Enterobacterales</taxon>
        <taxon>Enterobacteriaceae</taxon>
        <taxon>Shigella</taxon>
    </lineage>
</organism>
<evidence type="ECO:0000255" key="1">
    <source>
        <dbReference type="HAMAP-Rule" id="MF_01717"/>
    </source>
</evidence>
<feature type="chain" id="PRO_0000092514" description="Galactose/methyl galactoside import ATP-binding protein MglA">
    <location>
        <begin position="1"/>
        <end position="506"/>
    </location>
</feature>
<feature type="domain" description="ABC transporter 1" evidence="1">
    <location>
        <begin position="14"/>
        <end position="249"/>
    </location>
</feature>
<feature type="domain" description="ABC transporter 2" evidence="1">
    <location>
        <begin position="264"/>
        <end position="506"/>
    </location>
</feature>
<feature type="binding site" evidence="1">
    <location>
        <begin position="46"/>
        <end position="53"/>
    </location>
    <ligand>
        <name>ATP</name>
        <dbReference type="ChEBI" id="CHEBI:30616"/>
    </ligand>
</feature>
<keyword id="KW-0067">ATP-binding</keyword>
<keyword id="KW-0997">Cell inner membrane</keyword>
<keyword id="KW-1003">Cell membrane</keyword>
<keyword id="KW-0472">Membrane</keyword>
<keyword id="KW-0547">Nucleotide-binding</keyword>
<keyword id="KW-1185">Reference proteome</keyword>
<keyword id="KW-0677">Repeat</keyword>
<keyword id="KW-0762">Sugar transport</keyword>
<keyword id="KW-1278">Translocase</keyword>
<keyword id="KW-0813">Transport</keyword>
<dbReference type="EC" id="7.5.2.11" evidence="1"/>
<dbReference type="EMBL" id="AE005674">
    <property type="protein sequence ID" value="AAN43755.1"/>
    <property type="molecule type" value="Genomic_DNA"/>
</dbReference>
<dbReference type="EMBL" id="AE014073">
    <property type="protein sequence ID" value="AAP17572.1"/>
    <property type="molecule type" value="Genomic_DNA"/>
</dbReference>
<dbReference type="RefSeq" id="NP_708048.1">
    <property type="nucleotide sequence ID" value="NC_004337.2"/>
</dbReference>
<dbReference type="RefSeq" id="WP_000255039.1">
    <property type="nucleotide sequence ID" value="NZ_WPGW01000017.1"/>
</dbReference>
<dbReference type="SMR" id="P0AAG9"/>
<dbReference type="STRING" id="198214.SF2234"/>
<dbReference type="PaxDb" id="198214-SF2234"/>
<dbReference type="GeneID" id="1027318"/>
<dbReference type="GeneID" id="75172277"/>
<dbReference type="KEGG" id="sfl:SF2234"/>
<dbReference type="KEGG" id="sfx:S2363"/>
<dbReference type="PATRIC" id="fig|198214.7.peg.2676"/>
<dbReference type="HOGENOM" id="CLU_000604_92_3_6"/>
<dbReference type="Proteomes" id="UP000001006">
    <property type="component" value="Chromosome"/>
</dbReference>
<dbReference type="Proteomes" id="UP000002673">
    <property type="component" value="Chromosome"/>
</dbReference>
<dbReference type="GO" id="GO:0005886">
    <property type="term" value="C:plasma membrane"/>
    <property type="evidence" value="ECO:0007669"/>
    <property type="project" value="UniProtKB-SubCell"/>
</dbReference>
<dbReference type="GO" id="GO:0005524">
    <property type="term" value="F:ATP binding"/>
    <property type="evidence" value="ECO:0007669"/>
    <property type="project" value="UniProtKB-KW"/>
</dbReference>
<dbReference type="GO" id="GO:0016887">
    <property type="term" value="F:ATP hydrolysis activity"/>
    <property type="evidence" value="ECO:0007669"/>
    <property type="project" value="InterPro"/>
</dbReference>
<dbReference type="CDD" id="cd03216">
    <property type="entry name" value="ABC_Carb_Monos_I"/>
    <property type="match status" value="1"/>
</dbReference>
<dbReference type="CDD" id="cd03215">
    <property type="entry name" value="ABC_Carb_Monos_II"/>
    <property type="match status" value="1"/>
</dbReference>
<dbReference type="FunFam" id="3.40.50.300:FF:000126">
    <property type="entry name" value="Galactose/methyl galactoside import ATP-binding protein MglA"/>
    <property type="match status" value="1"/>
</dbReference>
<dbReference type="FunFam" id="3.40.50.300:FF:000127">
    <property type="entry name" value="Ribose import ATP-binding protein RbsA"/>
    <property type="match status" value="1"/>
</dbReference>
<dbReference type="Gene3D" id="3.40.50.300">
    <property type="entry name" value="P-loop containing nucleotide triphosphate hydrolases"/>
    <property type="match status" value="2"/>
</dbReference>
<dbReference type="InterPro" id="IPR003593">
    <property type="entry name" value="AAA+_ATPase"/>
</dbReference>
<dbReference type="InterPro" id="IPR050107">
    <property type="entry name" value="ABC_carbohydrate_import_ATPase"/>
</dbReference>
<dbReference type="InterPro" id="IPR003439">
    <property type="entry name" value="ABC_transporter-like_ATP-bd"/>
</dbReference>
<dbReference type="InterPro" id="IPR017871">
    <property type="entry name" value="ABC_transporter-like_CS"/>
</dbReference>
<dbReference type="InterPro" id="IPR027417">
    <property type="entry name" value="P-loop_NTPase"/>
</dbReference>
<dbReference type="NCBIfam" id="NF008215">
    <property type="entry name" value="PRK10982.1"/>
    <property type="match status" value="1"/>
</dbReference>
<dbReference type="PANTHER" id="PTHR43790">
    <property type="entry name" value="CARBOHYDRATE TRANSPORT ATP-BINDING PROTEIN MG119-RELATED"/>
    <property type="match status" value="1"/>
</dbReference>
<dbReference type="PANTHER" id="PTHR43790:SF7">
    <property type="entry name" value="GALACTOSE_METHYL GALACTOSIDE IMPORT ATP-BINDING PROTEIN MGLA"/>
    <property type="match status" value="1"/>
</dbReference>
<dbReference type="Pfam" id="PF00005">
    <property type="entry name" value="ABC_tran"/>
    <property type="match status" value="2"/>
</dbReference>
<dbReference type="SMART" id="SM00382">
    <property type="entry name" value="AAA"/>
    <property type="match status" value="2"/>
</dbReference>
<dbReference type="SUPFAM" id="SSF52540">
    <property type="entry name" value="P-loop containing nucleoside triphosphate hydrolases"/>
    <property type="match status" value="2"/>
</dbReference>
<dbReference type="PROSITE" id="PS00211">
    <property type="entry name" value="ABC_TRANSPORTER_1"/>
    <property type="match status" value="1"/>
</dbReference>
<dbReference type="PROSITE" id="PS50893">
    <property type="entry name" value="ABC_TRANSPORTER_2"/>
    <property type="match status" value="2"/>
</dbReference>
<dbReference type="PROSITE" id="PS51260">
    <property type="entry name" value="MGLA"/>
    <property type="match status" value="1"/>
</dbReference>
<accession>P0AAG9</accession>
<accession>P23199</accession>
<accession>P76442</accession>
<reference key="1">
    <citation type="journal article" date="2002" name="Nucleic Acids Res.">
        <title>Genome sequence of Shigella flexneri 2a: insights into pathogenicity through comparison with genomes of Escherichia coli K12 and O157.</title>
        <authorList>
            <person name="Jin Q."/>
            <person name="Yuan Z."/>
            <person name="Xu J."/>
            <person name="Wang Y."/>
            <person name="Shen Y."/>
            <person name="Lu W."/>
            <person name="Wang J."/>
            <person name="Liu H."/>
            <person name="Yang J."/>
            <person name="Yang F."/>
            <person name="Zhang X."/>
            <person name="Zhang J."/>
            <person name="Yang G."/>
            <person name="Wu H."/>
            <person name="Qu D."/>
            <person name="Dong J."/>
            <person name="Sun L."/>
            <person name="Xue Y."/>
            <person name="Zhao A."/>
            <person name="Gao Y."/>
            <person name="Zhu J."/>
            <person name="Kan B."/>
            <person name="Ding K."/>
            <person name="Chen S."/>
            <person name="Cheng H."/>
            <person name="Yao Z."/>
            <person name="He B."/>
            <person name="Chen R."/>
            <person name="Ma D."/>
            <person name="Qiang B."/>
            <person name="Wen Y."/>
            <person name="Hou Y."/>
            <person name="Yu J."/>
        </authorList>
    </citation>
    <scope>NUCLEOTIDE SEQUENCE [LARGE SCALE GENOMIC DNA]</scope>
    <source>
        <strain>301 / Serotype 2a</strain>
    </source>
</reference>
<reference key="2">
    <citation type="journal article" date="2003" name="Infect. Immun.">
        <title>Complete genome sequence and comparative genomics of Shigella flexneri serotype 2a strain 2457T.</title>
        <authorList>
            <person name="Wei J."/>
            <person name="Goldberg M.B."/>
            <person name="Burland V."/>
            <person name="Venkatesan M.M."/>
            <person name="Deng W."/>
            <person name="Fournier G."/>
            <person name="Mayhew G.F."/>
            <person name="Plunkett G. III"/>
            <person name="Rose D.J."/>
            <person name="Darling A."/>
            <person name="Mau B."/>
            <person name="Perna N.T."/>
            <person name="Payne S.M."/>
            <person name="Runyen-Janecky L.J."/>
            <person name="Zhou S."/>
            <person name="Schwartz D.C."/>
            <person name="Blattner F.R."/>
        </authorList>
    </citation>
    <scope>NUCLEOTIDE SEQUENCE [LARGE SCALE GENOMIC DNA]</scope>
    <source>
        <strain>ATCC 700930 / 2457T / Serotype 2a</strain>
    </source>
</reference>
<name>MGLA_SHIFL</name>
<comment type="function">
    <text evidence="1">Part of the ABC transporter complex MglABC involved in galactose/methyl galactoside import. Responsible for energy coupling to the transport system.</text>
</comment>
<comment type="catalytic activity">
    <reaction evidence="1">
        <text>D-galactose(out) + ATP + H2O = D-galactose(in) + ADP + phosphate + H(+)</text>
        <dbReference type="Rhea" id="RHEA:60156"/>
        <dbReference type="ChEBI" id="CHEBI:4139"/>
        <dbReference type="ChEBI" id="CHEBI:15377"/>
        <dbReference type="ChEBI" id="CHEBI:15378"/>
        <dbReference type="ChEBI" id="CHEBI:30616"/>
        <dbReference type="ChEBI" id="CHEBI:43474"/>
        <dbReference type="ChEBI" id="CHEBI:456216"/>
        <dbReference type="EC" id="7.5.2.11"/>
    </reaction>
    <physiologicalReaction direction="left-to-right" evidence="1">
        <dbReference type="Rhea" id="RHEA:60157"/>
    </physiologicalReaction>
</comment>
<comment type="catalytic activity">
    <reaction evidence="1">
        <text>methyl beta-D-galactoside(out) + ATP + H2O = methyl beta-D-galactoside(in) + ADP + phosphate + H(+)</text>
        <dbReference type="Rhea" id="RHEA:72531"/>
        <dbReference type="ChEBI" id="CHEBI:15377"/>
        <dbReference type="ChEBI" id="CHEBI:15378"/>
        <dbReference type="ChEBI" id="CHEBI:17540"/>
        <dbReference type="ChEBI" id="CHEBI:30616"/>
        <dbReference type="ChEBI" id="CHEBI:43474"/>
        <dbReference type="ChEBI" id="CHEBI:456216"/>
    </reaction>
    <physiologicalReaction direction="left-to-right" evidence="1">
        <dbReference type="Rhea" id="RHEA:72532"/>
    </physiologicalReaction>
</comment>
<comment type="subunit">
    <text evidence="1">The complex is composed of one ATP-binding protein (MglA), two transmembrane proteins (MglC) and a solute-binding protein (MglB).</text>
</comment>
<comment type="subcellular location">
    <subcellularLocation>
        <location evidence="1">Cell inner membrane</location>
        <topology evidence="1">Peripheral membrane protein</topology>
    </subcellularLocation>
</comment>
<comment type="similarity">
    <text evidence="1">Belongs to the ABC transporter superfamily. Galactose/methyl galactoside importer (TC 3.A.1.2.3) family.</text>
</comment>
<protein>
    <recommendedName>
        <fullName evidence="1">Galactose/methyl galactoside import ATP-binding protein MglA</fullName>
        <ecNumber evidence="1">7.5.2.11</ecNumber>
    </recommendedName>
</protein>
<sequence length="506" mass="56415">MVSSTTPSSGEYLLEMSGINKSFPGVKALDNVNLKVRPHSIHALMGENGAGKSTLLKCLFGIYQKDSGTILFQGKEIDFHSAKEALENGISMVHQELNLVLQRSVMDNMWLGRYPTKGMFVDQDKMYRETKAIFDELDIDIDPRARVGTLSVSQMQMIEIAKAFSYNAKIVIMDEPTSSLTEKEVNHLFTIIRKLKERGCGIVYISHKMEEIFQLCDEVTVLRDGQWIATEPLAGLTMDKIIAMMVGRSLNQRFPDKENKPGEVILEVRNLTSLRQPSIRDVSFDLHKGEILGIAGLVGAKRTDIVETLFGIREKSAGTITLHGKQINNHNANEAINHGFALVTEERRSTGIYAYLDIGFNSLISNIRNYKNKVGLLDNSRMKSDTQWVIDSMRVKTPGHRTQIGSLSGGNQQKVIIGRWLLTQPEILMLDEPTRGIDVGAKFEIYQLIAELAKKGKGIIIISSEMPELLGITDRILVMSNGLVSGIVDTKTTTQNEILRLASLHL</sequence>
<proteinExistence type="inferred from homology"/>
<gene>
    <name evidence="1" type="primary">mglA</name>
    <name type="ordered locus">SF2234</name>
    <name type="ordered locus">S2363</name>
</gene>